<evidence type="ECO:0000255" key="1">
    <source>
        <dbReference type="HAMAP-Rule" id="MF_01456"/>
    </source>
</evidence>
<geneLocation type="chloroplast"/>
<protein>
    <recommendedName>
        <fullName evidence="1">NAD(P)H-quinone oxidoreductase subunit 4L, chloroplastic</fullName>
        <ecNumber evidence="1">7.1.1.-</ecNumber>
    </recommendedName>
    <alternativeName>
        <fullName evidence="1">NAD(P)H dehydrogenase subunit 4L</fullName>
    </alternativeName>
    <alternativeName>
        <fullName evidence="1">NADH-plastoquinone oxidoreductase subunit 4L</fullName>
    </alternativeName>
</protein>
<comment type="function">
    <text evidence="1">NDH shuttles electrons from NAD(P)H:plastoquinone, via FMN and iron-sulfur (Fe-S) centers, to quinones in the photosynthetic chain and possibly in a chloroplast respiratory chain. The immediate electron acceptor for the enzyme in this species is believed to be plastoquinone. Couples the redox reaction to proton translocation, and thus conserves the redox energy in a proton gradient.</text>
</comment>
<comment type="catalytic activity">
    <reaction evidence="1">
        <text>a plastoquinone + NADH + (n+1) H(+)(in) = a plastoquinol + NAD(+) + n H(+)(out)</text>
        <dbReference type="Rhea" id="RHEA:42608"/>
        <dbReference type="Rhea" id="RHEA-COMP:9561"/>
        <dbReference type="Rhea" id="RHEA-COMP:9562"/>
        <dbReference type="ChEBI" id="CHEBI:15378"/>
        <dbReference type="ChEBI" id="CHEBI:17757"/>
        <dbReference type="ChEBI" id="CHEBI:57540"/>
        <dbReference type="ChEBI" id="CHEBI:57945"/>
        <dbReference type="ChEBI" id="CHEBI:62192"/>
    </reaction>
</comment>
<comment type="catalytic activity">
    <reaction evidence="1">
        <text>a plastoquinone + NADPH + (n+1) H(+)(in) = a plastoquinol + NADP(+) + n H(+)(out)</text>
        <dbReference type="Rhea" id="RHEA:42612"/>
        <dbReference type="Rhea" id="RHEA-COMP:9561"/>
        <dbReference type="Rhea" id="RHEA-COMP:9562"/>
        <dbReference type="ChEBI" id="CHEBI:15378"/>
        <dbReference type="ChEBI" id="CHEBI:17757"/>
        <dbReference type="ChEBI" id="CHEBI:57783"/>
        <dbReference type="ChEBI" id="CHEBI:58349"/>
        <dbReference type="ChEBI" id="CHEBI:62192"/>
    </reaction>
</comment>
<comment type="subunit">
    <text evidence="1">NDH is composed of at least 16 different subunits, 5 of which are encoded in the nucleus.</text>
</comment>
<comment type="subcellular location">
    <subcellularLocation>
        <location evidence="1">Plastid</location>
        <location evidence="1">Chloroplast thylakoid membrane</location>
        <topology evidence="1">Multi-pass membrane protein</topology>
    </subcellularLocation>
</comment>
<comment type="similarity">
    <text evidence="1">Belongs to the complex I subunit 4L family.</text>
</comment>
<reference key="1">
    <citation type="journal article" date="2007" name="BMC Genomics">
        <title>Comparative chloroplast genomics: analyses including new sequences from the angiosperms Nuphar advena and Ranunculus macranthus.</title>
        <authorList>
            <person name="Raubeson L.A."/>
            <person name="Peery R."/>
            <person name="Chumley T.W."/>
            <person name="Dziubek C."/>
            <person name="Fourcade H.M."/>
            <person name="Boore J.L."/>
            <person name="Jansen R.K."/>
        </authorList>
    </citation>
    <scope>NUCLEOTIDE SEQUENCE [LARGE SCALE GENOMIC DNA]</scope>
</reference>
<feature type="chain" id="PRO_0000360365" description="NAD(P)H-quinone oxidoreductase subunit 4L, chloroplastic">
    <location>
        <begin position="1"/>
        <end position="101"/>
    </location>
</feature>
<feature type="transmembrane region" description="Helical" evidence="1">
    <location>
        <begin position="2"/>
        <end position="22"/>
    </location>
</feature>
<feature type="transmembrane region" description="Helical" evidence="1">
    <location>
        <begin position="32"/>
        <end position="52"/>
    </location>
</feature>
<feature type="transmembrane region" description="Helical" evidence="1">
    <location>
        <begin position="61"/>
        <end position="81"/>
    </location>
</feature>
<organism>
    <name type="scientific">Ranunculus macranthus</name>
    <name type="common">Large buttercup</name>
    <dbReference type="NCBI Taxonomy" id="334596"/>
    <lineage>
        <taxon>Eukaryota</taxon>
        <taxon>Viridiplantae</taxon>
        <taxon>Streptophyta</taxon>
        <taxon>Embryophyta</taxon>
        <taxon>Tracheophyta</taxon>
        <taxon>Spermatophyta</taxon>
        <taxon>Magnoliopsida</taxon>
        <taxon>Ranunculales</taxon>
        <taxon>Ranunculaceae</taxon>
        <taxon>Ranunculoideae</taxon>
        <taxon>Ranunculeae</taxon>
        <taxon>Ranunculus</taxon>
    </lineage>
</organism>
<gene>
    <name evidence="1" type="primary">ndhE</name>
</gene>
<accession>A1XGT9</accession>
<sequence length="101" mass="11208">MMLEHVLVLSSYLLSIGIYGLITSRNMVRALMCLELILNAVNINFVTFSDLFDNRQLKGDIFSIFVIGIAAAEAAIGLAIISAIHRNRKSTRINQSNLLNK</sequence>
<keyword id="KW-0150">Chloroplast</keyword>
<keyword id="KW-0472">Membrane</keyword>
<keyword id="KW-0520">NAD</keyword>
<keyword id="KW-0521">NADP</keyword>
<keyword id="KW-0934">Plastid</keyword>
<keyword id="KW-0618">Plastoquinone</keyword>
<keyword id="KW-0874">Quinone</keyword>
<keyword id="KW-0793">Thylakoid</keyword>
<keyword id="KW-1278">Translocase</keyword>
<keyword id="KW-0812">Transmembrane</keyword>
<keyword id="KW-1133">Transmembrane helix</keyword>
<keyword id="KW-0813">Transport</keyword>
<proteinExistence type="inferred from homology"/>
<dbReference type="EC" id="7.1.1.-" evidence="1"/>
<dbReference type="EMBL" id="DQ359689">
    <property type="protein sequence ID" value="ABC70807.1"/>
    <property type="molecule type" value="Genomic_DNA"/>
</dbReference>
<dbReference type="RefSeq" id="YP_001004237.1">
    <property type="nucleotide sequence ID" value="NC_008796.1"/>
</dbReference>
<dbReference type="SMR" id="A1XGT9"/>
<dbReference type="GeneID" id="4712189"/>
<dbReference type="GO" id="GO:0009535">
    <property type="term" value="C:chloroplast thylakoid membrane"/>
    <property type="evidence" value="ECO:0007669"/>
    <property type="project" value="UniProtKB-SubCell"/>
</dbReference>
<dbReference type="GO" id="GO:0030964">
    <property type="term" value="C:NADH dehydrogenase complex"/>
    <property type="evidence" value="ECO:0007669"/>
    <property type="project" value="TreeGrafter"/>
</dbReference>
<dbReference type="GO" id="GO:0016655">
    <property type="term" value="F:oxidoreductase activity, acting on NAD(P)H, quinone or similar compound as acceptor"/>
    <property type="evidence" value="ECO:0007669"/>
    <property type="project" value="UniProtKB-UniRule"/>
</dbReference>
<dbReference type="GO" id="GO:0048038">
    <property type="term" value="F:quinone binding"/>
    <property type="evidence" value="ECO:0007669"/>
    <property type="project" value="UniProtKB-KW"/>
</dbReference>
<dbReference type="GO" id="GO:0042773">
    <property type="term" value="P:ATP synthesis coupled electron transport"/>
    <property type="evidence" value="ECO:0007669"/>
    <property type="project" value="InterPro"/>
</dbReference>
<dbReference type="GO" id="GO:0019684">
    <property type="term" value="P:photosynthesis, light reaction"/>
    <property type="evidence" value="ECO:0007669"/>
    <property type="project" value="UniProtKB-UniRule"/>
</dbReference>
<dbReference type="FunFam" id="1.10.287.3510:FF:000001">
    <property type="entry name" value="NADH-quinone oxidoreductase subunit K"/>
    <property type="match status" value="1"/>
</dbReference>
<dbReference type="Gene3D" id="1.10.287.3510">
    <property type="match status" value="1"/>
</dbReference>
<dbReference type="HAMAP" id="MF_01456">
    <property type="entry name" value="NDH1_NuoK"/>
    <property type="match status" value="1"/>
</dbReference>
<dbReference type="InterPro" id="IPR001133">
    <property type="entry name" value="NADH_UbQ_OxRdtase_chain4L/K"/>
</dbReference>
<dbReference type="InterPro" id="IPR039428">
    <property type="entry name" value="NUOK/Mnh_C1-like"/>
</dbReference>
<dbReference type="NCBIfam" id="NF004320">
    <property type="entry name" value="PRK05715.1-2"/>
    <property type="match status" value="1"/>
</dbReference>
<dbReference type="PANTHER" id="PTHR11434:SF16">
    <property type="entry name" value="NADH-UBIQUINONE OXIDOREDUCTASE CHAIN 4L"/>
    <property type="match status" value="1"/>
</dbReference>
<dbReference type="PANTHER" id="PTHR11434">
    <property type="entry name" value="NADH-UBIQUINONE OXIDOREDUCTASE SUBUNIT ND4L"/>
    <property type="match status" value="1"/>
</dbReference>
<dbReference type="Pfam" id="PF00420">
    <property type="entry name" value="Oxidored_q2"/>
    <property type="match status" value="1"/>
</dbReference>
<name>NU4LC_RANMC</name>